<keyword id="KW-0025">Alternative splicing</keyword>
<keyword id="KW-0256">Endoplasmic reticulum</keyword>
<keyword id="KW-0443">Lipid metabolism</keyword>
<keyword id="KW-0472">Membrane</keyword>
<keyword id="KW-0492">Microsome</keyword>
<keyword id="KW-0520">NAD</keyword>
<keyword id="KW-0521">NADP</keyword>
<keyword id="KW-0560">Oxidoreductase</keyword>
<keyword id="KW-1267">Proteomics identification</keyword>
<keyword id="KW-1185">Reference proteome</keyword>
<keyword id="KW-0732">Signal</keyword>
<keyword id="KW-0753">Steroid metabolism</keyword>
<protein>
    <recommendedName>
        <fullName>Dehydrogenase/reductase SDR family member 9</fullName>
        <ecNumber evidence="4">1.1.1.209</ecNumber>
        <ecNumber evidence="4">1.1.1.53</ecNumber>
    </recommendedName>
    <alternativeName>
        <fullName>3-alpha hydroxysteroid dehydrogenase</fullName>
        <shortName>3-alpha-HSD</shortName>
    </alternativeName>
    <alternativeName>
        <fullName>NADP-dependent retinol dehydrogenase/reductase</fullName>
    </alternativeName>
    <alternativeName>
        <fullName>RDH-E2</fullName>
    </alternativeName>
    <alternativeName>
        <fullName>RDHL</fullName>
    </alternativeName>
    <alternativeName>
        <fullName>Retinol dehydrogenase 15</fullName>
        <ecNumber evidence="5">1.1.1.105</ecNumber>
    </alternativeName>
    <alternativeName>
        <fullName evidence="10">Short chain dehydrogenase/reductase family 9C member 4</fullName>
    </alternativeName>
    <alternativeName>
        <fullName>Short-chain dehydrogenase/reductase retSDR8</fullName>
    </alternativeName>
    <alternativeName>
        <fullName evidence="8">Tracheobronchial epithelial cell-specific retinol dehydrogenase</fullName>
        <shortName evidence="8">RDH-TBE</shortName>
    </alternativeName>
</protein>
<gene>
    <name type="primary">DHRS9</name>
    <name type="synonym">RDH15</name>
    <name evidence="10" type="synonym">SDR9C4</name>
    <name type="ORF">UNQ835/PRO1773</name>
</gene>
<organism>
    <name type="scientific">Homo sapiens</name>
    <name type="common">Human</name>
    <dbReference type="NCBI Taxonomy" id="9606"/>
    <lineage>
        <taxon>Eukaryota</taxon>
        <taxon>Metazoa</taxon>
        <taxon>Chordata</taxon>
        <taxon>Craniata</taxon>
        <taxon>Vertebrata</taxon>
        <taxon>Euteleostomi</taxon>
        <taxon>Mammalia</taxon>
        <taxon>Eutheria</taxon>
        <taxon>Euarchontoglires</taxon>
        <taxon>Primates</taxon>
        <taxon>Haplorrhini</taxon>
        <taxon>Catarrhini</taxon>
        <taxon>Hominidae</taxon>
        <taxon>Homo</taxon>
    </lineage>
</organism>
<comment type="function">
    <text evidence="2 4 5 6 7">3-alpha-hydroxysteroid dehydrogenase that converts 3-alpha-tetrahydroprogesterone (allopregnanolone) to dihydroxyprogesterone and 3-alpha-androstanediol to dihydroxyprogesterone (PubMed:11294878, PubMed:29541409). Also plays a role in the biosynthesis of retinoic acid from retinaldehyde (PubMed:11304534, PubMed:12618084). Can utilize both NADH and NADPH.</text>
</comment>
<comment type="catalytic activity">
    <reaction evidence="4">
        <text>3beta-hydroxy-5alpha-pregnane-20-one + NAD(+) = 5alpha-pregnane-3,20-dione + NADH + H(+)</text>
        <dbReference type="Rhea" id="RHEA:41988"/>
        <dbReference type="ChEBI" id="CHEBI:11909"/>
        <dbReference type="ChEBI" id="CHEBI:15378"/>
        <dbReference type="ChEBI" id="CHEBI:28952"/>
        <dbReference type="ChEBI" id="CHEBI:57540"/>
        <dbReference type="ChEBI" id="CHEBI:57945"/>
    </reaction>
</comment>
<comment type="catalytic activity">
    <reaction evidence="4">
        <text>17beta-hydroxy-5alpha-androstan-3-one + NAD(+) = 5alpha-androstan-3,17-dione + NADH + H(+)</text>
        <dbReference type="Rhea" id="RHEA:41992"/>
        <dbReference type="ChEBI" id="CHEBI:15378"/>
        <dbReference type="ChEBI" id="CHEBI:15994"/>
        <dbReference type="ChEBI" id="CHEBI:16330"/>
        <dbReference type="ChEBI" id="CHEBI:57540"/>
        <dbReference type="ChEBI" id="CHEBI:57945"/>
    </reaction>
</comment>
<comment type="catalytic activity">
    <reaction evidence="4 7">
        <text>androsterone + NAD(+) = 5alpha-androstan-3,17-dione + NADH + H(+)</text>
        <dbReference type="Rhea" id="RHEA:20381"/>
        <dbReference type="ChEBI" id="CHEBI:15378"/>
        <dbReference type="ChEBI" id="CHEBI:15994"/>
        <dbReference type="ChEBI" id="CHEBI:16032"/>
        <dbReference type="ChEBI" id="CHEBI:57540"/>
        <dbReference type="ChEBI" id="CHEBI:57945"/>
        <dbReference type="EC" id="1.1.1.209"/>
    </reaction>
</comment>
<comment type="catalytic activity">
    <reaction evidence="4">
        <text>5alpha-androstane-3alpha,17beta-diol + NAD(+) = 17beta-hydroxy-5alpha-androstan-3-one + NADH + H(+)</text>
        <dbReference type="Rhea" id="RHEA:42004"/>
        <dbReference type="ChEBI" id="CHEBI:15378"/>
        <dbReference type="ChEBI" id="CHEBI:16330"/>
        <dbReference type="ChEBI" id="CHEBI:36713"/>
        <dbReference type="ChEBI" id="CHEBI:57540"/>
        <dbReference type="ChEBI" id="CHEBI:57945"/>
        <dbReference type="EC" id="1.1.1.53"/>
    </reaction>
</comment>
<comment type="catalytic activity">
    <reaction evidence="5">
        <text>all-trans-retinol + NAD(+) = all-trans-retinal + NADH + H(+)</text>
        <dbReference type="Rhea" id="RHEA:21284"/>
        <dbReference type="ChEBI" id="CHEBI:15378"/>
        <dbReference type="ChEBI" id="CHEBI:17336"/>
        <dbReference type="ChEBI" id="CHEBI:17898"/>
        <dbReference type="ChEBI" id="CHEBI:57540"/>
        <dbReference type="ChEBI" id="CHEBI:57945"/>
        <dbReference type="EC" id="1.1.1.105"/>
    </reaction>
</comment>
<comment type="catalytic activity">
    <reaction evidence="4">
        <text>3alpha-hydroxy-5alpha-pregnan-20-one + NAD(+) = 5alpha-pregnane-3,20-dione + NADH + H(+)</text>
        <dbReference type="Rhea" id="RHEA:41980"/>
        <dbReference type="ChEBI" id="CHEBI:15378"/>
        <dbReference type="ChEBI" id="CHEBI:28952"/>
        <dbReference type="ChEBI" id="CHEBI:50169"/>
        <dbReference type="ChEBI" id="CHEBI:57540"/>
        <dbReference type="ChEBI" id="CHEBI:57945"/>
    </reaction>
</comment>
<comment type="biophysicochemical properties">
    <kinetics>
        <KM evidence="4">9 uM for NADH tested with dihydrotestosterone</KM>
        <KM evidence="4">72 uM for NAD tested with allopregnanolone</KM>
        <KM evidence="4">5 uM for allopregnanolone</KM>
        <KM evidence="4">7.5 uM for 3-alpha-androstanediol</KM>
        <KM evidence="4">14 uM for dehydroepiandrosterone</KM>
        <KM evidence="4">24 uM for androsterone</KM>
        <KM evidence="4">12 uM for dihydrotestosterone</KM>
    </kinetics>
</comment>
<comment type="subunit">
    <text evidence="1">Homotetramer.</text>
</comment>
<comment type="interaction">
    <interactant intactId="EBI-19157435">
        <id>Q9BPW9-4</id>
    </interactant>
    <interactant intactId="EBI-12275524">
        <id>P23560-2</id>
        <label>BDNF</label>
    </interactant>
    <organismsDiffer>false</organismsDiffer>
    <experiments>3</experiments>
</comment>
<comment type="interaction">
    <interactant intactId="EBI-19157435">
        <id>Q9BPW9-4</id>
    </interactant>
    <interactant intactId="EBI-354056">
        <id>P04406</id>
        <label>GAPDH</label>
    </interactant>
    <organismsDiffer>false</organismsDiffer>
    <experiments>3</experiments>
</comment>
<comment type="interaction">
    <interactant intactId="EBI-19157435">
        <id>Q9BPW9-4</id>
    </interactant>
    <interactant intactId="EBI-727240">
        <id>Q9UNK0</id>
        <label>STX8</label>
    </interactant>
    <organismsDiffer>false</organismsDiffer>
    <experiments>3</experiments>
</comment>
<comment type="subcellular location">
    <subcellularLocation>
        <location evidence="4 5 6">Microsome membrane</location>
    </subcellularLocation>
    <subcellularLocation>
        <location evidence="12">Endoplasmic reticulum membrane</location>
    </subcellularLocation>
    <text>Associated with microsomal membranes.</text>
</comment>
<comment type="alternative products">
    <event type="alternative splicing"/>
    <isoform>
        <id>Q9BPW9-1</id>
        <name>1</name>
        <sequence type="displayed"/>
    </isoform>
    <isoform>
        <id>Q9BPW9-2</id>
        <name>2</name>
        <name>Retinol dehydrogenase homolog isoform-2</name>
        <sequence type="described" ref="VSP_015875"/>
    </isoform>
    <isoform>
        <id>Q9BPW9-3</id>
        <name>3</name>
        <name>Retinol dehydrogenase homolog isoform-1</name>
        <sequence type="described" ref="VSP_015876"/>
    </isoform>
    <isoform>
        <id>Q9BPW9-4</id>
        <name>4</name>
        <sequence type="described" ref="VSP_054357"/>
    </isoform>
</comment>
<comment type="tissue specificity">
    <text evidence="4 5 6">Highly expressed in trachea and epidermis. Detected at lower levels in spinal cord, bone marrow, brain, tongue, esophagus, heart, colon, testis, placenta, lung, skeletal muscle and lymph node.</text>
</comment>
<comment type="similarity">
    <text evidence="12">Belongs to the short-chain dehydrogenases/reductases (SDR) family.</text>
</comment>
<dbReference type="EC" id="1.1.1.209" evidence="4"/>
<dbReference type="EC" id="1.1.1.53" evidence="4"/>
<dbReference type="EC" id="1.1.1.105" evidence="5"/>
<dbReference type="EMBL" id="AF343729">
    <property type="protein sequence ID" value="AAK37528.1"/>
    <property type="molecule type" value="mRNA"/>
</dbReference>
<dbReference type="EMBL" id="AY017349">
    <property type="protein sequence ID" value="AAG49422.1"/>
    <property type="molecule type" value="mRNA"/>
</dbReference>
<dbReference type="EMBL" id="AF529286">
    <property type="protein sequence ID" value="AAN04008.1"/>
    <property type="molecule type" value="mRNA"/>
</dbReference>
<dbReference type="EMBL" id="AF529287">
    <property type="protein sequence ID" value="AAN04009.1"/>
    <property type="molecule type" value="mRNA"/>
</dbReference>
<dbReference type="EMBL" id="AF529288">
    <property type="protein sequence ID" value="AAN04010.1"/>
    <property type="molecule type" value="mRNA"/>
</dbReference>
<dbReference type="EMBL" id="AF295380">
    <property type="protein sequence ID" value="AAL37037.1"/>
    <property type="molecule type" value="mRNA"/>
</dbReference>
<dbReference type="EMBL" id="AF240697">
    <property type="protein sequence ID" value="AAF82747.1"/>
    <property type="molecule type" value="mRNA"/>
</dbReference>
<dbReference type="EMBL" id="AF240698">
    <property type="protein sequence ID" value="AAF82748.1"/>
    <property type="molecule type" value="mRNA"/>
</dbReference>
<dbReference type="EMBL" id="AY359046">
    <property type="protein sequence ID" value="AAQ89405.1"/>
    <property type="molecule type" value="mRNA"/>
</dbReference>
<dbReference type="EMBL" id="AK296625">
    <property type="protein sequence ID" value="BAH12402.1"/>
    <property type="molecule type" value="mRNA"/>
</dbReference>
<dbReference type="EMBL" id="AC007556">
    <property type="status" value="NOT_ANNOTATED_CDS"/>
    <property type="molecule type" value="Genomic_DNA"/>
</dbReference>
<dbReference type="EMBL" id="AC008177">
    <property type="status" value="NOT_ANNOTATED_CDS"/>
    <property type="molecule type" value="Genomic_DNA"/>
</dbReference>
<dbReference type="EMBL" id="CH471058">
    <property type="protein sequence ID" value="EAX11282.1"/>
    <property type="molecule type" value="Genomic_DNA"/>
</dbReference>
<dbReference type="EMBL" id="CH471058">
    <property type="protein sequence ID" value="EAX11283.1"/>
    <property type="molecule type" value="Genomic_DNA"/>
</dbReference>
<dbReference type="EMBL" id="CH471058">
    <property type="protein sequence ID" value="EAX11284.1"/>
    <property type="molecule type" value="Genomic_DNA"/>
</dbReference>
<dbReference type="EMBL" id="BC058883">
    <property type="protein sequence ID" value="AAH58883.1"/>
    <property type="molecule type" value="mRNA"/>
</dbReference>
<dbReference type="CCDS" id="CCDS2231.1">
    <molecule id="Q9BPW9-1"/>
</dbReference>
<dbReference type="CCDS" id="CCDS74600.1">
    <molecule id="Q9BPW9-4"/>
</dbReference>
<dbReference type="RefSeq" id="NP_001135742.1">
    <molecule id="Q9BPW9-1"/>
    <property type="nucleotide sequence ID" value="NM_001142270.2"/>
</dbReference>
<dbReference type="RefSeq" id="NP_001135743.1">
    <molecule id="Q9BPW9-1"/>
    <property type="nucleotide sequence ID" value="NM_001142271.2"/>
</dbReference>
<dbReference type="RefSeq" id="NP_001276692.1">
    <molecule id="Q9BPW9-4"/>
    <property type="nucleotide sequence ID" value="NM_001289763.2"/>
</dbReference>
<dbReference type="RefSeq" id="NP_001363853.1">
    <molecule id="Q9BPW9-1"/>
    <property type="nucleotide sequence ID" value="NM_001376924.1"/>
</dbReference>
<dbReference type="RefSeq" id="NP_954674.1">
    <molecule id="Q9BPW9-1"/>
    <property type="nucleotide sequence ID" value="NM_199204.2"/>
</dbReference>
<dbReference type="RefSeq" id="XP_011508777.1">
    <molecule id="Q9BPW9-1"/>
    <property type="nucleotide sequence ID" value="XM_011510475.2"/>
</dbReference>
<dbReference type="RefSeq" id="XP_047298795.1">
    <molecule id="Q9BPW9-1"/>
    <property type="nucleotide sequence ID" value="XM_047442839.1"/>
</dbReference>
<dbReference type="RefSeq" id="XP_054196087.1">
    <molecule id="Q9BPW9-1"/>
    <property type="nucleotide sequence ID" value="XM_054340112.1"/>
</dbReference>
<dbReference type="RefSeq" id="XP_054196088.1">
    <molecule id="Q9BPW9-1"/>
    <property type="nucleotide sequence ID" value="XM_054340113.1"/>
</dbReference>
<dbReference type="SMR" id="Q9BPW9"/>
<dbReference type="BioGRID" id="115472">
    <property type="interactions" value="24"/>
</dbReference>
<dbReference type="FunCoup" id="Q9BPW9">
    <property type="interactions" value="322"/>
</dbReference>
<dbReference type="IntAct" id="Q9BPW9">
    <property type="interactions" value="24"/>
</dbReference>
<dbReference type="STRING" id="9606.ENSP00000389241"/>
<dbReference type="BindingDB" id="Q9BPW9"/>
<dbReference type="ChEMBL" id="CHEMBL5974"/>
<dbReference type="DrugCentral" id="Q9BPW9"/>
<dbReference type="SwissLipids" id="SLP:000000793"/>
<dbReference type="PhosphoSitePlus" id="Q9BPW9"/>
<dbReference type="BioMuta" id="DHRS9"/>
<dbReference type="DMDM" id="74752227"/>
<dbReference type="jPOST" id="Q9BPW9"/>
<dbReference type="MassIVE" id="Q9BPW9"/>
<dbReference type="PaxDb" id="9606-ENSP00000389241"/>
<dbReference type="PeptideAtlas" id="Q9BPW9"/>
<dbReference type="ProteomicsDB" id="6563"/>
<dbReference type="ProteomicsDB" id="78582">
    <molecule id="Q9BPW9-1"/>
</dbReference>
<dbReference type="ProteomicsDB" id="78583">
    <molecule id="Q9BPW9-2"/>
</dbReference>
<dbReference type="ProteomicsDB" id="78584">
    <molecule id="Q9BPW9-3"/>
</dbReference>
<dbReference type="Antibodypedia" id="33805">
    <property type="antibodies" value="240 antibodies from 27 providers"/>
</dbReference>
<dbReference type="DNASU" id="10170"/>
<dbReference type="Ensembl" id="ENST00000357546.6">
    <molecule id="Q9BPW9-1"/>
    <property type="protein sequence ID" value="ENSP00000350154.2"/>
    <property type="gene ID" value="ENSG00000073737.17"/>
</dbReference>
<dbReference type="Ensembl" id="ENST00000412271.1">
    <molecule id="Q9BPW9-1"/>
    <property type="protein sequence ID" value="ENSP00000407747.1"/>
    <property type="gene ID" value="ENSG00000073737.17"/>
</dbReference>
<dbReference type="Ensembl" id="ENST00000421653.5">
    <molecule id="Q9BPW9-2"/>
    <property type="protein sequence ID" value="ENSP00000388066.1"/>
    <property type="gene ID" value="ENSG00000073737.17"/>
</dbReference>
<dbReference type="Ensembl" id="ENST00000428522.5">
    <molecule id="Q9BPW9-1"/>
    <property type="protein sequence ID" value="ENSP00000388564.1"/>
    <property type="gene ID" value="ENSG00000073737.17"/>
</dbReference>
<dbReference type="Ensembl" id="ENST00000432060.6">
    <molecule id="Q9BPW9-4"/>
    <property type="protein sequence ID" value="ENSP00000389241.2"/>
    <property type="gene ID" value="ENSG00000073737.17"/>
</dbReference>
<dbReference type="Ensembl" id="ENST00000436483.6">
    <molecule id="Q9BPW9-1"/>
    <property type="protein sequence ID" value="ENSP00000407167.2"/>
    <property type="gene ID" value="ENSG00000073737.17"/>
</dbReference>
<dbReference type="Ensembl" id="ENST00000602501.5">
    <molecule id="Q9BPW9-1"/>
    <property type="protein sequence ID" value="ENSP00000473337.1"/>
    <property type="gene ID" value="ENSG00000073737.17"/>
</dbReference>
<dbReference type="Ensembl" id="ENST00000674881.1">
    <molecule id="Q9BPW9-1"/>
    <property type="protein sequence ID" value="ENSP00000502399.1"/>
    <property type="gene ID" value="ENSG00000073737.17"/>
</dbReference>
<dbReference type="GeneID" id="10170"/>
<dbReference type="KEGG" id="hsa:10170"/>
<dbReference type="MANE-Select" id="ENST00000674881.1">
    <property type="protein sequence ID" value="ENSP00000502399.1"/>
    <property type="RefSeq nucleotide sequence ID" value="NM_001376924.1"/>
    <property type="RefSeq protein sequence ID" value="NP_001363853.1"/>
</dbReference>
<dbReference type="UCSC" id="uc002ueq.3">
    <molecule id="Q9BPW9-1"/>
    <property type="organism name" value="human"/>
</dbReference>
<dbReference type="AGR" id="HGNC:16888"/>
<dbReference type="CTD" id="10170"/>
<dbReference type="DisGeNET" id="10170"/>
<dbReference type="GeneCards" id="DHRS9"/>
<dbReference type="HGNC" id="HGNC:16888">
    <property type="gene designation" value="DHRS9"/>
</dbReference>
<dbReference type="HPA" id="ENSG00000073737">
    <property type="expression patterns" value="Tissue enhanced (heart muscle, intestine)"/>
</dbReference>
<dbReference type="MIM" id="612131">
    <property type="type" value="gene"/>
</dbReference>
<dbReference type="neXtProt" id="NX_Q9BPW9"/>
<dbReference type="OpenTargets" id="ENSG00000073737"/>
<dbReference type="PharmGKB" id="PA134913654"/>
<dbReference type="VEuPathDB" id="HostDB:ENSG00000073737"/>
<dbReference type="eggNOG" id="KOG1610">
    <property type="taxonomic scope" value="Eukaryota"/>
</dbReference>
<dbReference type="GeneTree" id="ENSGT00940000158665"/>
<dbReference type="HOGENOM" id="CLU_010194_2_0_1"/>
<dbReference type="InParanoid" id="Q9BPW9"/>
<dbReference type="OMA" id="PQTHYIA"/>
<dbReference type="OrthoDB" id="294295at2759"/>
<dbReference type="PAN-GO" id="Q9BPW9">
    <property type="GO annotations" value="5 GO annotations based on evolutionary models"/>
</dbReference>
<dbReference type="PhylomeDB" id="Q9BPW9"/>
<dbReference type="TreeFam" id="TF325617"/>
<dbReference type="BioCyc" id="MetaCyc:HS01113-MONOMER"/>
<dbReference type="PathwayCommons" id="Q9BPW9"/>
<dbReference type="Reactome" id="R-HSA-2453902">
    <property type="pathway name" value="The canonical retinoid cycle in rods (twilight vision)"/>
</dbReference>
<dbReference type="Reactome" id="R-HSA-5365859">
    <property type="pathway name" value="RA biosynthesis pathway"/>
</dbReference>
<dbReference type="SABIO-RK" id="Q9BPW9"/>
<dbReference type="SignaLink" id="Q9BPW9"/>
<dbReference type="SIGNOR" id="Q9BPW9"/>
<dbReference type="BioGRID-ORCS" id="10170">
    <property type="hits" value="7 hits in 1154 CRISPR screens"/>
</dbReference>
<dbReference type="GeneWiki" id="DHRS9"/>
<dbReference type="GenomeRNAi" id="10170"/>
<dbReference type="Pharos" id="Q9BPW9">
    <property type="development level" value="Tbio"/>
</dbReference>
<dbReference type="PRO" id="PR:Q9BPW9"/>
<dbReference type="Proteomes" id="UP000005640">
    <property type="component" value="Chromosome 2"/>
</dbReference>
<dbReference type="RNAct" id="Q9BPW9">
    <property type="molecule type" value="protein"/>
</dbReference>
<dbReference type="Bgee" id="ENSG00000073737">
    <property type="expression patterns" value="Expressed in nasal cavity epithelium and 162 other cell types or tissues"/>
</dbReference>
<dbReference type="ExpressionAtlas" id="Q9BPW9">
    <property type="expression patterns" value="baseline and differential"/>
</dbReference>
<dbReference type="GO" id="GO:0005789">
    <property type="term" value="C:endoplasmic reticulum membrane"/>
    <property type="evidence" value="ECO:0000314"/>
    <property type="project" value="UniProtKB"/>
</dbReference>
<dbReference type="GO" id="GO:0043231">
    <property type="term" value="C:intracellular membrane-bounded organelle"/>
    <property type="evidence" value="ECO:0000318"/>
    <property type="project" value="GO_Central"/>
</dbReference>
<dbReference type="GO" id="GO:0004022">
    <property type="term" value="F:alcohol dehydrogenase (NAD+) activity"/>
    <property type="evidence" value="ECO:0000314"/>
    <property type="project" value="UniProtKB"/>
</dbReference>
<dbReference type="GO" id="GO:0004745">
    <property type="term" value="F:all-trans-retinol dehydrogenase (NAD+) activity"/>
    <property type="evidence" value="ECO:0000314"/>
    <property type="project" value="UniProtKB"/>
</dbReference>
<dbReference type="GO" id="GO:0047044">
    <property type="term" value="F:androstan-3-alpha,17-beta-diol dehydrogenase (NAD+) activity"/>
    <property type="evidence" value="ECO:0000314"/>
    <property type="project" value="UniProtKB"/>
</dbReference>
<dbReference type="GO" id="GO:0047023">
    <property type="term" value="F:androsterone dehydrogenase [NAD(P)+] activity"/>
    <property type="evidence" value="ECO:0000314"/>
    <property type="project" value="UniProtKB"/>
</dbReference>
<dbReference type="GO" id="GO:0016491">
    <property type="term" value="F:oxidoreductase activity"/>
    <property type="evidence" value="ECO:0000318"/>
    <property type="project" value="GO_Central"/>
</dbReference>
<dbReference type="GO" id="GO:0016854">
    <property type="term" value="F:racemase and epimerase activity"/>
    <property type="evidence" value="ECO:0000303"/>
    <property type="project" value="UniProtKB"/>
</dbReference>
<dbReference type="GO" id="GO:0047035">
    <property type="term" value="F:testosterone dehydrogenase (NAD+) activity"/>
    <property type="evidence" value="ECO:0000314"/>
    <property type="project" value="UniProtKB"/>
</dbReference>
<dbReference type="GO" id="GO:0042904">
    <property type="term" value="P:9-cis-retinoic acid biosynthetic process"/>
    <property type="evidence" value="ECO:0000314"/>
    <property type="project" value="UniProtKB"/>
</dbReference>
<dbReference type="GO" id="GO:0008209">
    <property type="term" value="P:androgen metabolic process"/>
    <property type="evidence" value="ECO:0000314"/>
    <property type="project" value="UniProtKB"/>
</dbReference>
<dbReference type="GO" id="GO:0030855">
    <property type="term" value="P:epithelial cell differentiation"/>
    <property type="evidence" value="ECO:0000303"/>
    <property type="project" value="UniProtKB"/>
</dbReference>
<dbReference type="GO" id="GO:0042448">
    <property type="term" value="P:progesterone metabolic process"/>
    <property type="evidence" value="ECO:0000314"/>
    <property type="project" value="UniProtKB"/>
</dbReference>
<dbReference type="GO" id="GO:0042572">
    <property type="term" value="P:retinol metabolic process"/>
    <property type="evidence" value="ECO:0000303"/>
    <property type="project" value="UniProtKB"/>
</dbReference>
<dbReference type="GO" id="GO:0008202">
    <property type="term" value="P:steroid metabolic process"/>
    <property type="evidence" value="ECO:0000318"/>
    <property type="project" value="GO_Central"/>
</dbReference>
<dbReference type="CDD" id="cd09805">
    <property type="entry name" value="type2_17beta_HSD-like_SDR_c"/>
    <property type="match status" value="1"/>
</dbReference>
<dbReference type="FunFam" id="3.40.50.720:FF:000074">
    <property type="entry name" value="Retinol dehydrogenase type 1"/>
    <property type="match status" value="1"/>
</dbReference>
<dbReference type="Gene3D" id="3.40.50.720">
    <property type="entry name" value="NAD(P)-binding Rossmann-like Domain"/>
    <property type="match status" value="1"/>
</dbReference>
<dbReference type="InterPro" id="IPR036291">
    <property type="entry name" value="NAD(P)-bd_dom_sf"/>
</dbReference>
<dbReference type="InterPro" id="IPR002347">
    <property type="entry name" value="SDR_fam"/>
</dbReference>
<dbReference type="PANTHER" id="PTHR43313:SF15">
    <property type="entry name" value="DEHYDROGENASE_REDUCTASE SDR FAMILY MEMBER 9"/>
    <property type="match status" value="1"/>
</dbReference>
<dbReference type="PANTHER" id="PTHR43313">
    <property type="entry name" value="SHORT-CHAIN DEHYDROGENASE/REDUCTASE FAMILY 9C"/>
    <property type="match status" value="1"/>
</dbReference>
<dbReference type="Pfam" id="PF00106">
    <property type="entry name" value="adh_short"/>
    <property type="match status" value="1"/>
</dbReference>
<dbReference type="PRINTS" id="PR00081">
    <property type="entry name" value="GDHRDH"/>
</dbReference>
<dbReference type="PRINTS" id="PR00080">
    <property type="entry name" value="SDRFAMILY"/>
</dbReference>
<dbReference type="SUPFAM" id="SSF51735">
    <property type="entry name" value="NAD(P)-binding Rossmann-fold domains"/>
    <property type="match status" value="1"/>
</dbReference>
<proteinExistence type="evidence at protein level"/>
<feature type="signal peptide" evidence="3">
    <location>
        <begin position="1"/>
        <end position="17"/>
    </location>
</feature>
<feature type="chain" id="PRO_0000042617" description="Dehydrogenase/reductase SDR family member 9">
    <location>
        <begin position="18"/>
        <end position="319"/>
    </location>
</feature>
<feature type="active site" description="Proton acceptor" evidence="13">
    <location>
        <position position="176"/>
    </location>
</feature>
<feature type="binding site" evidence="1">
    <location>
        <begin position="34"/>
        <end position="58"/>
    </location>
    <ligand>
        <name>NAD(+)</name>
        <dbReference type="ChEBI" id="CHEBI:57540"/>
    </ligand>
</feature>
<feature type="binding site" evidence="1">
    <location>
        <position position="83"/>
    </location>
    <ligand>
        <name>NAD(+)</name>
        <dbReference type="ChEBI" id="CHEBI:57540"/>
    </ligand>
</feature>
<feature type="binding site" evidence="1">
    <location>
        <position position="164"/>
    </location>
    <ligand>
        <name>substrate</name>
    </ligand>
</feature>
<feature type="binding site" evidence="1">
    <location>
        <position position="180"/>
    </location>
    <ligand>
        <name>NAD(+)</name>
        <dbReference type="ChEBI" id="CHEBI:57540"/>
    </ligand>
</feature>
<feature type="splice variant" id="VSP_015875" description="In isoform 2." evidence="11">
    <location>
        <begin position="1"/>
        <end position="147"/>
    </location>
</feature>
<feature type="splice variant" id="VSP_054357" description="In isoform 4." evidence="9">
    <original>M</original>
    <variation>MPEGRSHCACSITSLTLLVSLTRVTLDILQKLDPPQPAHWRHHLLVLYKKGVYLSHTGGKM</variation>
    <location>
        <position position="1"/>
    </location>
</feature>
<feature type="splice variant" id="VSP_015876" description="In isoform 3." evidence="11">
    <original>PGLFKTNLADPVKVIEKKLAIWEQLSPDIKQQYGEGYIEKS</original>
    <variation>R</variation>
    <location>
        <begin position="206"/>
        <end position="246"/>
    </location>
</feature>
<feature type="sequence variant" id="VAR_052320" description="In dbSNP:rs11695788.">
    <original>D</original>
    <variation>H</variation>
    <location>
        <position position="286"/>
    </location>
</feature>
<feature type="mutagenesis site" description="Decreases androsterone dehydrogenase activity; when associated with R-180." evidence="7">
    <original>Y</original>
    <variation>F</variation>
    <location>
        <position position="176"/>
    </location>
</feature>
<feature type="mutagenesis site" description="Decreases androsterone dehydrogenase activity; when associated with F-176." evidence="7">
    <original>K</original>
    <variation>R</variation>
    <location>
        <position position="180"/>
    </location>
</feature>
<feature type="sequence conflict" description="In Ref. 5; AAF82747." evidence="12" ref="5">
    <original>V</original>
    <variation>G</variation>
    <location>
        <position position="162"/>
    </location>
</feature>
<feature type="sequence conflict" description="In Ref. 5; AAF82747." evidence="12" ref="5">
    <original>M</original>
    <variation>L</variation>
    <location>
        <position position="194"/>
    </location>
</feature>
<reference key="1">
    <citation type="journal article" date="2001" name="J. Biol. Chem.">
        <title>Characterization of a novel type of human microsomal 3alpha-hydroxysteroid dehydrogenase. Unique tissue distribution and catalytic properties.</title>
        <authorList>
            <person name="Chetyrkin S.V."/>
            <person name="Belyaeva O.V."/>
            <person name="Gough W.H."/>
            <person name="Kedishvili N.Y."/>
        </authorList>
    </citation>
    <scope>NUCLEOTIDE SEQUENCE [MRNA] (ISOFORM 1)</scope>
    <scope>FUNCTION</scope>
    <scope>BIOPHYSICOCHEMICAL PROPERTIES</scope>
    <scope>SUBCELLULAR LOCATION</scope>
    <scope>TISSUE SPECIFICITY</scope>
    <scope>CATALYTIC ACTIVITY</scope>
    <source>
        <tissue>Heart</tissue>
        <tissue>Liver</tissue>
    </source>
</reference>
<reference key="2">
    <citation type="journal article" date="2001" name="J. Biol. Chem.">
        <title>Characterization of a novel airway epithelial cell-specific short chain alcohol dehydrogenase/reductase gene whose expression is up-regulated by retinoids and is involved in the metabolism of retinol.</title>
        <authorList>
            <person name="Soref C.M."/>
            <person name="Di Y.-P."/>
            <person name="Hayden L."/>
            <person name="Zhao Y.H."/>
            <person name="Satre M.A."/>
            <person name="Wu R."/>
        </authorList>
    </citation>
    <scope>NUCLEOTIDE SEQUENCE [MRNA] (ISOFORM 1)</scope>
    <scope>FUNCTION</scope>
    <scope>SUBCELLULAR LOCATION</scope>
    <scope>TISSUE SPECIFICITY</scope>
    <scope>CATALYTIC ACTIVITY</scope>
    <source>
        <tissue>Tracheobronchial epithelium</tissue>
    </source>
</reference>
<reference key="3">
    <citation type="journal article" date="2003" name="Mol. Genet. Metab.">
        <title>Expression pattern and biochemical characteristics of a major epidermal retinol dehydrogenase.</title>
        <authorList>
            <person name="Markova N.G."/>
            <person name="Pinkas-Sarafova A."/>
            <person name="Karaman-Jurukovska N."/>
            <person name="Jurukovski V."/>
            <person name="Simon M."/>
        </authorList>
    </citation>
    <scope>NUCLEOTIDE SEQUENCE [MRNA] (ISOFORM 1)</scope>
    <scope>FUNCTION</scope>
    <scope>SUBCELLULAR LOCATION</scope>
    <scope>TISSUE SPECIFICITY</scope>
    <source>
        <tissue>Keratinocyte</tissue>
    </source>
</reference>
<reference key="4">
    <citation type="journal article" date="2000" name="Methods Enzymol.">
        <title>Short-chain dehydrogenases/reductases in retina.</title>
        <authorList>
            <person name="Haeseleer F."/>
            <person name="Palczewski K."/>
        </authorList>
    </citation>
    <scope>NUCLEOTIDE SEQUENCE [MRNA] (ISOFORM 1)</scope>
    <source>
        <tissue>Retina</tissue>
    </source>
</reference>
<reference key="5">
    <citation type="submission" date="2000-03" db="EMBL/GenBank/DDBJ databases">
        <title>Human retinol dehydrogenase homolog gene.</title>
        <authorList>
            <person name="Zhang J.W."/>
            <person name="Liu T.X."/>
            <person name="Shen Y."/>
            <person name="Chen S.J."/>
            <person name="Chen Z."/>
        </authorList>
    </citation>
    <scope>NUCLEOTIDE SEQUENCE [LARGE SCALE MRNA] (ISOFORMS 2 AND 3)</scope>
    <source>
        <tissue>Neuroblastoma</tissue>
    </source>
</reference>
<reference key="6">
    <citation type="journal article" date="2003" name="Genome Res.">
        <title>The secreted protein discovery initiative (SPDI), a large-scale effort to identify novel human secreted and transmembrane proteins: a bioinformatics assessment.</title>
        <authorList>
            <person name="Clark H.F."/>
            <person name="Gurney A.L."/>
            <person name="Abaya E."/>
            <person name="Baker K."/>
            <person name="Baldwin D.T."/>
            <person name="Brush J."/>
            <person name="Chen J."/>
            <person name="Chow B."/>
            <person name="Chui C."/>
            <person name="Crowley C."/>
            <person name="Currell B."/>
            <person name="Deuel B."/>
            <person name="Dowd P."/>
            <person name="Eaton D."/>
            <person name="Foster J.S."/>
            <person name="Grimaldi C."/>
            <person name="Gu Q."/>
            <person name="Hass P.E."/>
            <person name="Heldens S."/>
            <person name="Huang A."/>
            <person name="Kim H.S."/>
            <person name="Klimowski L."/>
            <person name="Jin Y."/>
            <person name="Johnson S."/>
            <person name="Lee J."/>
            <person name="Lewis L."/>
            <person name="Liao D."/>
            <person name="Mark M.R."/>
            <person name="Robbie E."/>
            <person name="Sanchez C."/>
            <person name="Schoenfeld J."/>
            <person name="Seshagiri S."/>
            <person name="Simmons L."/>
            <person name="Singh J."/>
            <person name="Smith V."/>
            <person name="Stinson J."/>
            <person name="Vagts A."/>
            <person name="Vandlen R.L."/>
            <person name="Watanabe C."/>
            <person name="Wieand D."/>
            <person name="Woods K."/>
            <person name="Xie M.-H."/>
            <person name="Yansura D.G."/>
            <person name="Yi S."/>
            <person name="Yu G."/>
            <person name="Yuan J."/>
            <person name="Zhang M."/>
            <person name="Zhang Z."/>
            <person name="Goddard A.D."/>
            <person name="Wood W.I."/>
            <person name="Godowski P.J."/>
            <person name="Gray A.M."/>
        </authorList>
    </citation>
    <scope>NUCLEOTIDE SEQUENCE [LARGE SCALE MRNA] (ISOFORM 1)</scope>
</reference>
<reference key="7">
    <citation type="journal article" date="2004" name="Nat. Genet.">
        <title>Complete sequencing and characterization of 21,243 full-length human cDNAs.</title>
        <authorList>
            <person name="Ota T."/>
            <person name="Suzuki Y."/>
            <person name="Nishikawa T."/>
            <person name="Otsuki T."/>
            <person name="Sugiyama T."/>
            <person name="Irie R."/>
            <person name="Wakamatsu A."/>
            <person name="Hayashi K."/>
            <person name="Sato H."/>
            <person name="Nagai K."/>
            <person name="Kimura K."/>
            <person name="Makita H."/>
            <person name="Sekine M."/>
            <person name="Obayashi M."/>
            <person name="Nishi T."/>
            <person name="Shibahara T."/>
            <person name="Tanaka T."/>
            <person name="Ishii S."/>
            <person name="Yamamoto J."/>
            <person name="Saito K."/>
            <person name="Kawai Y."/>
            <person name="Isono Y."/>
            <person name="Nakamura Y."/>
            <person name="Nagahari K."/>
            <person name="Murakami K."/>
            <person name="Yasuda T."/>
            <person name="Iwayanagi T."/>
            <person name="Wagatsuma M."/>
            <person name="Shiratori A."/>
            <person name="Sudo H."/>
            <person name="Hosoiri T."/>
            <person name="Kaku Y."/>
            <person name="Kodaira H."/>
            <person name="Kondo H."/>
            <person name="Sugawara M."/>
            <person name="Takahashi M."/>
            <person name="Kanda K."/>
            <person name="Yokoi T."/>
            <person name="Furuya T."/>
            <person name="Kikkawa E."/>
            <person name="Omura Y."/>
            <person name="Abe K."/>
            <person name="Kamihara K."/>
            <person name="Katsuta N."/>
            <person name="Sato K."/>
            <person name="Tanikawa M."/>
            <person name="Yamazaki M."/>
            <person name="Ninomiya K."/>
            <person name="Ishibashi T."/>
            <person name="Yamashita H."/>
            <person name="Murakawa K."/>
            <person name="Fujimori K."/>
            <person name="Tanai H."/>
            <person name="Kimata M."/>
            <person name="Watanabe M."/>
            <person name="Hiraoka S."/>
            <person name="Chiba Y."/>
            <person name="Ishida S."/>
            <person name="Ono Y."/>
            <person name="Takiguchi S."/>
            <person name="Watanabe S."/>
            <person name="Yosida M."/>
            <person name="Hotuta T."/>
            <person name="Kusano J."/>
            <person name="Kanehori K."/>
            <person name="Takahashi-Fujii A."/>
            <person name="Hara H."/>
            <person name="Tanase T.-O."/>
            <person name="Nomura Y."/>
            <person name="Togiya S."/>
            <person name="Komai F."/>
            <person name="Hara R."/>
            <person name="Takeuchi K."/>
            <person name="Arita M."/>
            <person name="Imose N."/>
            <person name="Musashino K."/>
            <person name="Yuuki H."/>
            <person name="Oshima A."/>
            <person name="Sasaki N."/>
            <person name="Aotsuka S."/>
            <person name="Yoshikawa Y."/>
            <person name="Matsunawa H."/>
            <person name="Ichihara T."/>
            <person name="Shiohata N."/>
            <person name="Sano S."/>
            <person name="Moriya S."/>
            <person name="Momiyama H."/>
            <person name="Satoh N."/>
            <person name="Takami S."/>
            <person name="Terashima Y."/>
            <person name="Suzuki O."/>
            <person name="Nakagawa S."/>
            <person name="Senoh A."/>
            <person name="Mizoguchi H."/>
            <person name="Goto Y."/>
            <person name="Shimizu F."/>
            <person name="Wakebe H."/>
            <person name="Hishigaki H."/>
            <person name="Watanabe T."/>
            <person name="Sugiyama A."/>
            <person name="Takemoto M."/>
            <person name="Kawakami B."/>
            <person name="Yamazaki M."/>
            <person name="Watanabe K."/>
            <person name="Kumagai A."/>
            <person name="Itakura S."/>
            <person name="Fukuzumi Y."/>
            <person name="Fujimori Y."/>
            <person name="Komiyama M."/>
            <person name="Tashiro H."/>
            <person name="Tanigami A."/>
            <person name="Fujiwara T."/>
            <person name="Ono T."/>
            <person name="Yamada K."/>
            <person name="Fujii Y."/>
            <person name="Ozaki K."/>
            <person name="Hirao M."/>
            <person name="Ohmori Y."/>
            <person name="Kawabata A."/>
            <person name="Hikiji T."/>
            <person name="Kobatake N."/>
            <person name="Inagaki H."/>
            <person name="Ikema Y."/>
            <person name="Okamoto S."/>
            <person name="Okitani R."/>
            <person name="Kawakami T."/>
            <person name="Noguchi S."/>
            <person name="Itoh T."/>
            <person name="Shigeta K."/>
            <person name="Senba T."/>
            <person name="Matsumura K."/>
            <person name="Nakajima Y."/>
            <person name="Mizuno T."/>
            <person name="Morinaga M."/>
            <person name="Sasaki M."/>
            <person name="Togashi T."/>
            <person name="Oyama M."/>
            <person name="Hata H."/>
            <person name="Watanabe M."/>
            <person name="Komatsu T."/>
            <person name="Mizushima-Sugano J."/>
            <person name="Satoh T."/>
            <person name="Shirai Y."/>
            <person name="Takahashi Y."/>
            <person name="Nakagawa K."/>
            <person name="Okumura K."/>
            <person name="Nagase T."/>
            <person name="Nomura N."/>
            <person name="Kikuchi H."/>
            <person name="Masuho Y."/>
            <person name="Yamashita R."/>
            <person name="Nakai K."/>
            <person name="Yada T."/>
            <person name="Nakamura Y."/>
            <person name="Ohara O."/>
            <person name="Isogai T."/>
            <person name="Sugano S."/>
        </authorList>
    </citation>
    <scope>NUCLEOTIDE SEQUENCE [LARGE SCALE MRNA] (ISOFORM 4)</scope>
    <source>
        <tissue>Colon</tissue>
    </source>
</reference>
<reference key="8">
    <citation type="journal article" date="2005" name="Nature">
        <title>Generation and annotation of the DNA sequences of human chromosomes 2 and 4.</title>
        <authorList>
            <person name="Hillier L.W."/>
            <person name="Graves T.A."/>
            <person name="Fulton R.S."/>
            <person name="Fulton L.A."/>
            <person name="Pepin K.H."/>
            <person name="Minx P."/>
            <person name="Wagner-McPherson C."/>
            <person name="Layman D."/>
            <person name="Wylie K."/>
            <person name="Sekhon M."/>
            <person name="Becker M.C."/>
            <person name="Fewell G.A."/>
            <person name="Delehaunty K.D."/>
            <person name="Miner T.L."/>
            <person name="Nash W.E."/>
            <person name="Kremitzki C."/>
            <person name="Oddy L."/>
            <person name="Du H."/>
            <person name="Sun H."/>
            <person name="Bradshaw-Cordum H."/>
            <person name="Ali J."/>
            <person name="Carter J."/>
            <person name="Cordes M."/>
            <person name="Harris A."/>
            <person name="Isak A."/>
            <person name="van Brunt A."/>
            <person name="Nguyen C."/>
            <person name="Du F."/>
            <person name="Courtney L."/>
            <person name="Kalicki J."/>
            <person name="Ozersky P."/>
            <person name="Abbott S."/>
            <person name="Armstrong J."/>
            <person name="Belter E.A."/>
            <person name="Caruso L."/>
            <person name="Cedroni M."/>
            <person name="Cotton M."/>
            <person name="Davidson T."/>
            <person name="Desai A."/>
            <person name="Elliott G."/>
            <person name="Erb T."/>
            <person name="Fronick C."/>
            <person name="Gaige T."/>
            <person name="Haakenson W."/>
            <person name="Haglund K."/>
            <person name="Holmes A."/>
            <person name="Harkins R."/>
            <person name="Kim K."/>
            <person name="Kruchowski S.S."/>
            <person name="Strong C.M."/>
            <person name="Grewal N."/>
            <person name="Goyea E."/>
            <person name="Hou S."/>
            <person name="Levy A."/>
            <person name="Martinka S."/>
            <person name="Mead K."/>
            <person name="McLellan M.D."/>
            <person name="Meyer R."/>
            <person name="Randall-Maher J."/>
            <person name="Tomlinson C."/>
            <person name="Dauphin-Kohlberg S."/>
            <person name="Kozlowicz-Reilly A."/>
            <person name="Shah N."/>
            <person name="Swearengen-Shahid S."/>
            <person name="Snider J."/>
            <person name="Strong J.T."/>
            <person name="Thompson J."/>
            <person name="Yoakum M."/>
            <person name="Leonard S."/>
            <person name="Pearman C."/>
            <person name="Trani L."/>
            <person name="Radionenko M."/>
            <person name="Waligorski J.E."/>
            <person name="Wang C."/>
            <person name="Rock S.M."/>
            <person name="Tin-Wollam A.-M."/>
            <person name="Maupin R."/>
            <person name="Latreille P."/>
            <person name="Wendl M.C."/>
            <person name="Yang S.-P."/>
            <person name="Pohl C."/>
            <person name="Wallis J.W."/>
            <person name="Spieth J."/>
            <person name="Bieri T.A."/>
            <person name="Berkowicz N."/>
            <person name="Nelson J.O."/>
            <person name="Osborne J."/>
            <person name="Ding L."/>
            <person name="Meyer R."/>
            <person name="Sabo A."/>
            <person name="Shotland Y."/>
            <person name="Sinha P."/>
            <person name="Wohldmann P.E."/>
            <person name="Cook L.L."/>
            <person name="Hickenbotham M.T."/>
            <person name="Eldred J."/>
            <person name="Williams D."/>
            <person name="Jones T.A."/>
            <person name="She X."/>
            <person name="Ciccarelli F.D."/>
            <person name="Izaurralde E."/>
            <person name="Taylor J."/>
            <person name="Schmutz J."/>
            <person name="Myers R.M."/>
            <person name="Cox D.R."/>
            <person name="Huang X."/>
            <person name="McPherson J.D."/>
            <person name="Mardis E.R."/>
            <person name="Clifton S.W."/>
            <person name="Warren W.C."/>
            <person name="Chinwalla A.T."/>
            <person name="Eddy S.R."/>
            <person name="Marra M.A."/>
            <person name="Ovcharenko I."/>
            <person name="Furey T.S."/>
            <person name="Miller W."/>
            <person name="Eichler E.E."/>
            <person name="Bork P."/>
            <person name="Suyama M."/>
            <person name="Torrents D."/>
            <person name="Waterston R.H."/>
            <person name="Wilson R.K."/>
        </authorList>
    </citation>
    <scope>NUCLEOTIDE SEQUENCE [LARGE SCALE GENOMIC DNA]</scope>
</reference>
<reference key="9">
    <citation type="submission" date="2005-09" db="EMBL/GenBank/DDBJ databases">
        <authorList>
            <person name="Mural R.J."/>
            <person name="Istrail S."/>
            <person name="Sutton G.G."/>
            <person name="Florea L."/>
            <person name="Halpern A.L."/>
            <person name="Mobarry C.M."/>
            <person name="Lippert R."/>
            <person name="Walenz B."/>
            <person name="Shatkay H."/>
            <person name="Dew I."/>
            <person name="Miller J.R."/>
            <person name="Flanigan M.J."/>
            <person name="Edwards N.J."/>
            <person name="Bolanos R."/>
            <person name="Fasulo D."/>
            <person name="Halldorsson B.V."/>
            <person name="Hannenhalli S."/>
            <person name="Turner R."/>
            <person name="Yooseph S."/>
            <person name="Lu F."/>
            <person name="Nusskern D.R."/>
            <person name="Shue B.C."/>
            <person name="Zheng X.H."/>
            <person name="Zhong F."/>
            <person name="Delcher A.L."/>
            <person name="Huson D.H."/>
            <person name="Kravitz S.A."/>
            <person name="Mouchard L."/>
            <person name="Reinert K."/>
            <person name="Remington K.A."/>
            <person name="Clark A.G."/>
            <person name="Waterman M.S."/>
            <person name="Eichler E.E."/>
            <person name="Adams M.D."/>
            <person name="Hunkapiller M.W."/>
            <person name="Myers E.W."/>
            <person name="Venter J.C."/>
        </authorList>
    </citation>
    <scope>NUCLEOTIDE SEQUENCE [LARGE SCALE GENOMIC DNA]</scope>
</reference>
<reference key="10">
    <citation type="journal article" date="2004" name="Genome Res.">
        <title>The status, quality, and expansion of the NIH full-length cDNA project: the Mammalian Gene Collection (MGC).</title>
        <authorList>
            <consortium name="The MGC Project Team"/>
        </authorList>
    </citation>
    <scope>NUCLEOTIDE SEQUENCE [LARGE SCALE MRNA] (ISOFORM 1)</scope>
    <source>
        <tissue>Brain</tissue>
    </source>
</reference>
<reference key="11">
    <citation type="journal article" date="2009" name="Chem. Biol. Interact.">
        <title>The SDR (short-chain dehydrogenase/reductase and related enzymes) nomenclature initiative.</title>
        <authorList>
            <person name="Persson B."/>
            <person name="Kallberg Y."/>
            <person name="Bray J.E."/>
            <person name="Bruford E."/>
            <person name="Dellaporta S.L."/>
            <person name="Favia A.D."/>
            <person name="Duarte R.G."/>
            <person name="Joernvall H."/>
            <person name="Kavanagh K.L."/>
            <person name="Kedishvili N."/>
            <person name="Kisiela M."/>
            <person name="Maser E."/>
            <person name="Mindnich R."/>
            <person name="Orchard S."/>
            <person name="Penning T.M."/>
            <person name="Thornton J.M."/>
            <person name="Adamski J."/>
            <person name="Oppermann U."/>
        </authorList>
    </citation>
    <scope>GENE FAMILY</scope>
    <scope>NOMENCLATURE</scope>
</reference>
<reference key="12">
    <citation type="journal article" date="2018" name="Oncotarget">
        <title>Inhibition of dihydrotestosterone synthesis in prostate cancer by combined frontdoor and backdoor pathway blockade.</title>
        <authorList>
            <person name="Fiandalo M.V."/>
            <person name="Stocking J.J."/>
            <person name="Pop E.A."/>
            <person name="Wilton J.H."/>
            <person name="Mantione K.M."/>
            <person name="Li Y."/>
            <person name="Attwood K.M."/>
            <person name="Azabdaftari G."/>
            <person name="Wu Y."/>
            <person name="Watt D.S."/>
            <person name="Wilson E.M."/>
            <person name="Mohler J.L."/>
        </authorList>
    </citation>
    <scope>MUTAGENESIS OF TYR-176 AND LYS-180</scope>
    <scope>CATALYTIC ACTIVITY</scope>
</reference>
<accession>Q9BPW9</accession>
<accession>B7Z416</accession>
<accession>D3DPC1</accession>
<accession>Q5RKX1</accession>
<accession>Q9NRA9</accession>
<accession>Q9NRB0</accession>
<sequence length="319" mass="35227">MLFWVLGLLILCGFLWTRKGKLKIEDITDKYIFITGCDSGFGNLAARTFDKKGFHVIAACLTESGSTALKAETSERLRTVLLDVTDPENVKRTAQWVKNQVGEKGLWGLINNAGVPGVLAPTDWLTLEDYREPIEVNLFGLISVTLNMLPLVKKAQGRVINVSSVGGRLAIVGGGYTPSKYAVEGFNDSLRRDMKAFGVHVSCIEPGLFKTNLADPVKVIEKKLAIWEQLSPDIKQQYGEGYIEKSLDKLKGNKSYVNMDLSPVVECMDHALTSLFPKTHYAAGKDAKIFWIPLSHMPAALQDFLLLKQKAELANPKAV</sequence>
<name>DHRS9_HUMAN</name>
<evidence type="ECO:0000250" key="1"/>
<evidence type="ECO:0000250" key="2">
    <source>
        <dbReference type="UniProtKB" id="Q8VD48"/>
    </source>
</evidence>
<evidence type="ECO:0000255" key="3"/>
<evidence type="ECO:0000269" key="4">
    <source>
    </source>
</evidence>
<evidence type="ECO:0000269" key="5">
    <source>
    </source>
</evidence>
<evidence type="ECO:0000269" key="6">
    <source>
    </source>
</evidence>
<evidence type="ECO:0000269" key="7">
    <source>
    </source>
</evidence>
<evidence type="ECO:0000303" key="8">
    <source>
    </source>
</evidence>
<evidence type="ECO:0000303" key="9">
    <source>
    </source>
</evidence>
<evidence type="ECO:0000303" key="10">
    <source>
    </source>
</evidence>
<evidence type="ECO:0000303" key="11">
    <source ref="5"/>
</evidence>
<evidence type="ECO:0000305" key="12"/>
<evidence type="ECO:0000305" key="13">
    <source>
    </source>
</evidence>